<keyword id="KW-0004">4Fe-4S</keyword>
<keyword id="KW-0067">ATP-binding</keyword>
<keyword id="KW-0963">Cytoplasm</keyword>
<keyword id="KW-0408">Iron</keyword>
<keyword id="KW-0411">Iron-sulfur</keyword>
<keyword id="KW-0460">Magnesium</keyword>
<keyword id="KW-0479">Metal-binding</keyword>
<keyword id="KW-0547">Nucleotide-binding</keyword>
<keyword id="KW-0694">RNA-binding</keyword>
<keyword id="KW-0808">Transferase</keyword>
<keyword id="KW-0819">tRNA processing</keyword>
<keyword id="KW-0820">tRNA-binding</keyword>
<accession>Q0BMI3</accession>
<evidence type="ECO:0000255" key="1">
    <source>
        <dbReference type="HAMAP-Rule" id="MF_01850"/>
    </source>
</evidence>
<comment type="function">
    <text evidence="1">Catalyzes the ATP-dependent 2-thiolation of cytidine in position 32 of tRNA, to form 2-thiocytidine (s(2)C32). The sulfur atoms are provided by the cysteine/cysteine desulfurase (IscS) system.</text>
</comment>
<comment type="catalytic activity">
    <reaction evidence="1">
        <text>cytidine(32) in tRNA + S-sulfanyl-L-cysteinyl-[cysteine desulfurase] + AH2 + ATP = 2-thiocytidine(32) in tRNA + L-cysteinyl-[cysteine desulfurase] + A + AMP + diphosphate + H(+)</text>
        <dbReference type="Rhea" id="RHEA:57048"/>
        <dbReference type="Rhea" id="RHEA-COMP:10288"/>
        <dbReference type="Rhea" id="RHEA-COMP:12157"/>
        <dbReference type="Rhea" id="RHEA-COMP:12158"/>
        <dbReference type="Rhea" id="RHEA-COMP:14821"/>
        <dbReference type="ChEBI" id="CHEBI:13193"/>
        <dbReference type="ChEBI" id="CHEBI:15378"/>
        <dbReference type="ChEBI" id="CHEBI:17499"/>
        <dbReference type="ChEBI" id="CHEBI:29950"/>
        <dbReference type="ChEBI" id="CHEBI:30616"/>
        <dbReference type="ChEBI" id="CHEBI:33019"/>
        <dbReference type="ChEBI" id="CHEBI:61963"/>
        <dbReference type="ChEBI" id="CHEBI:82748"/>
        <dbReference type="ChEBI" id="CHEBI:141453"/>
        <dbReference type="ChEBI" id="CHEBI:456215"/>
    </reaction>
    <physiologicalReaction direction="left-to-right" evidence="1">
        <dbReference type="Rhea" id="RHEA:57049"/>
    </physiologicalReaction>
</comment>
<comment type="cofactor">
    <cofactor evidence="1">
        <name>Mg(2+)</name>
        <dbReference type="ChEBI" id="CHEBI:18420"/>
    </cofactor>
</comment>
<comment type="cofactor">
    <cofactor evidence="1">
        <name>[4Fe-4S] cluster</name>
        <dbReference type="ChEBI" id="CHEBI:49883"/>
    </cofactor>
    <text evidence="1">Binds 1 [4Fe-4S] cluster per subunit. The cluster is chelated by three Cys residues, the fourth Fe has a free coordination site that may bind a sulfur atom transferred from the persulfide of IscS.</text>
</comment>
<comment type="pathway">
    <text evidence="1">tRNA modification.</text>
</comment>
<comment type="subunit">
    <text evidence="1">Homodimer.</text>
</comment>
<comment type="subcellular location">
    <subcellularLocation>
        <location evidence="1">Cytoplasm</location>
    </subcellularLocation>
</comment>
<comment type="miscellaneous">
    <text evidence="1">The thiolation reaction likely consists of two steps: a first activation step by ATP to form an adenylated intermediate of the target base of tRNA, and a second nucleophilic substitution step of the sulfur (S) atom supplied by the hydrosulfide attached to the Fe-S cluster.</text>
</comment>
<comment type="similarity">
    <text evidence="1">Belongs to the TtcA family.</text>
</comment>
<proteinExistence type="inferred from homology"/>
<name>TTCA1_FRATO</name>
<organism>
    <name type="scientific">Francisella tularensis subsp. holarctica (strain OSU18)</name>
    <dbReference type="NCBI Taxonomy" id="393011"/>
    <lineage>
        <taxon>Bacteria</taxon>
        <taxon>Pseudomonadati</taxon>
        <taxon>Pseudomonadota</taxon>
        <taxon>Gammaproteobacteria</taxon>
        <taxon>Thiotrichales</taxon>
        <taxon>Francisellaceae</taxon>
        <taxon>Francisella</taxon>
    </lineage>
</organism>
<feature type="chain" id="PRO_0000348733" description="tRNA-cytidine(32) 2-sulfurtransferase 1">
    <location>
        <begin position="1"/>
        <end position="251"/>
    </location>
</feature>
<feature type="short sequence motif" description="PP-loop motif" evidence="1">
    <location>
        <begin position="33"/>
        <end position="38"/>
    </location>
</feature>
<feature type="binding site" evidence="1">
    <location>
        <position position="108"/>
    </location>
    <ligand>
        <name>[4Fe-4S] cluster</name>
        <dbReference type="ChEBI" id="CHEBI:49883"/>
    </ligand>
</feature>
<feature type="binding site" evidence="1">
    <location>
        <position position="111"/>
    </location>
    <ligand>
        <name>[4Fe-4S] cluster</name>
        <dbReference type="ChEBI" id="CHEBI:49883"/>
    </ligand>
</feature>
<feature type="binding site" evidence="1">
    <location>
        <position position="199"/>
    </location>
    <ligand>
        <name>[4Fe-4S] cluster</name>
        <dbReference type="ChEBI" id="CHEBI:49883"/>
    </ligand>
</feature>
<sequence>MTKTEKKLRHYITKAIADYKLLDKGDKAMLCLSGGKDSFGLLKVLHGLIEDKTYDIDLHVYTLDQSQPGWDDSQLRKYLDDLGVSYEIETKNTYGVVIDKVPEGKTYCSLCSRLRRGNIYRYAKEHKMDKIILGHHRDDLIQSLLMSILYQGQIKSMPPKFVTQDGENTVIRPMVLVQERDLIEFAKEENFPIIPCNLCGSQENLKRKKVKKLIQDLALENPKVPSNILNSLSNVLPSHLMDKNLLNSLEN</sequence>
<protein>
    <recommendedName>
        <fullName evidence="1">tRNA-cytidine(32) 2-sulfurtransferase 1</fullName>
        <ecNumber evidence="1">2.8.1.-</ecNumber>
    </recommendedName>
    <alternativeName>
        <fullName evidence="1">Two-thiocytidine biosynthesis protein A 1</fullName>
    </alternativeName>
    <alternativeName>
        <fullName evidence="1">tRNA 2-thiocytidine biosynthesis protein TtcA 1</fullName>
    </alternativeName>
</protein>
<dbReference type="EC" id="2.8.1.-" evidence="1"/>
<dbReference type="EMBL" id="CP000437">
    <property type="protein sequence ID" value="ABI82701.1"/>
    <property type="molecule type" value="Genomic_DNA"/>
</dbReference>
<dbReference type="SMR" id="Q0BMI3"/>
<dbReference type="KEGG" id="fth:FTH_0761"/>
<dbReference type="GO" id="GO:0005737">
    <property type="term" value="C:cytoplasm"/>
    <property type="evidence" value="ECO:0007669"/>
    <property type="project" value="UniProtKB-SubCell"/>
</dbReference>
<dbReference type="GO" id="GO:0051539">
    <property type="term" value="F:4 iron, 4 sulfur cluster binding"/>
    <property type="evidence" value="ECO:0007669"/>
    <property type="project" value="UniProtKB-UniRule"/>
</dbReference>
<dbReference type="GO" id="GO:0005524">
    <property type="term" value="F:ATP binding"/>
    <property type="evidence" value="ECO:0007669"/>
    <property type="project" value="UniProtKB-UniRule"/>
</dbReference>
<dbReference type="GO" id="GO:0000287">
    <property type="term" value="F:magnesium ion binding"/>
    <property type="evidence" value="ECO:0007669"/>
    <property type="project" value="UniProtKB-UniRule"/>
</dbReference>
<dbReference type="GO" id="GO:0016783">
    <property type="term" value="F:sulfurtransferase activity"/>
    <property type="evidence" value="ECO:0007669"/>
    <property type="project" value="UniProtKB-UniRule"/>
</dbReference>
<dbReference type="GO" id="GO:0000049">
    <property type="term" value="F:tRNA binding"/>
    <property type="evidence" value="ECO:0007669"/>
    <property type="project" value="UniProtKB-KW"/>
</dbReference>
<dbReference type="GO" id="GO:0034227">
    <property type="term" value="P:tRNA thio-modification"/>
    <property type="evidence" value="ECO:0007669"/>
    <property type="project" value="UniProtKB-UniRule"/>
</dbReference>
<dbReference type="CDD" id="cd24138">
    <property type="entry name" value="TtcA-like"/>
    <property type="match status" value="1"/>
</dbReference>
<dbReference type="Gene3D" id="3.40.50.620">
    <property type="entry name" value="HUPs"/>
    <property type="match status" value="1"/>
</dbReference>
<dbReference type="HAMAP" id="MF_01850">
    <property type="entry name" value="TtcA"/>
    <property type="match status" value="1"/>
</dbReference>
<dbReference type="InterPro" id="IPR014729">
    <property type="entry name" value="Rossmann-like_a/b/a_fold"/>
</dbReference>
<dbReference type="InterPro" id="IPR011063">
    <property type="entry name" value="TilS/TtcA_N"/>
</dbReference>
<dbReference type="InterPro" id="IPR012089">
    <property type="entry name" value="tRNA_Cyd_32_2_STrfase"/>
</dbReference>
<dbReference type="InterPro" id="IPR035107">
    <property type="entry name" value="tRNA_thiolation_TtcA_Ctu1"/>
</dbReference>
<dbReference type="NCBIfam" id="NF007972">
    <property type="entry name" value="PRK10696.1"/>
    <property type="match status" value="1"/>
</dbReference>
<dbReference type="PANTHER" id="PTHR43686:SF1">
    <property type="entry name" value="AMINOTRAN_5 DOMAIN-CONTAINING PROTEIN"/>
    <property type="match status" value="1"/>
</dbReference>
<dbReference type="PANTHER" id="PTHR43686">
    <property type="entry name" value="SULFURTRANSFERASE-RELATED"/>
    <property type="match status" value="1"/>
</dbReference>
<dbReference type="Pfam" id="PF01171">
    <property type="entry name" value="ATP_bind_3"/>
    <property type="match status" value="1"/>
</dbReference>
<dbReference type="PIRSF" id="PIRSF004976">
    <property type="entry name" value="ATPase_YdaO"/>
    <property type="match status" value="1"/>
</dbReference>
<dbReference type="SUPFAM" id="SSF52402">
    <property type="entry name" value="Adenine nucleotide alpha hydrolases-like"/>
    <property type="match status" value="1"/>
</dbReference>
<gene>
    <name evidence="1" type="primary">ttcA1</name>
    <name type="ordered locus">FTH_0761</name>
</gene>
<reference key="1">
    <citation type="journal article" date="2006" name="J. Bacteriol.">
        <title>Chromosome rearrangement and diversification of Francisella tularensis revealed by the type B (OSU18) genome sequence.</title>
        <authorList>
            <person name="Petrosino J.F."/>
            <person name="Xiang Q."/>
            <person name="Karpathy S.E."/>
            <person name="Jiang H."/>
            <person name="Yerrapragada S."/>
            <person name="Liu Y."/>
            <person name="Gioia J."/>
            <person name="Hemphill L."/>
            <person name="Gonzalez A."/>
            <person name="Raghavan T.M."/>
            <person name="Uzman A."/>
            <person name="Fox G.E."/>
            <person name="Highlander S."/>
            <person name="Reichard M."/>
            <person name="Morton R.J."/>
            <person name="Clinkenbeard K.D."/>
            <person name="Weinstock G.M."/>
        </authorList>
    </citation>
    <scope>NUCLEOTIDE SEQUENCE [LARGE SCALE GENOMIC DNA]</scope>
    <source>
        <strain>OSU18</strain>
    </source>
</reference>